<reference key="1">
    <citation type="journal article" date="2001" name="Lancet">
        <title>Whole genome sequencing of meticillin-resistant Staphylococcus aureus.</title>
        <authorList>
            <person name="Kuroda M."/>
            <person name="Ohta T."/>
            <person name="Uchiyama I."/>
            <person name="Baba T."/>
            <person name="Yuzawa H."/>
            <person name="Kobayashi I."/>
            <person name="Cui L."/>
            <person name="Oguchi A."/>
            <person name="Aoki K."/>
            <person name="Nagai Y."/>
            <person name="Lian J.-Q."/>
            <person name="Ito T."/>
            <person name="Kanamori M."/>
            <person name="Matsumaru H."/>
            <person name="Maruyama A."/>
            <person name="Murakami H."/>
            <person name="Hosoyama A."/>
            <person name="Mizutani-Ui Y."/>
            <person name="Takahashi N.K."/>
            <person name="Sawano T."/>
            <person name="Inoue R."/>
            <person name="Kaito C."/>
            <person name="Sekimizu K."/>
            <person name="Hirakawa H."/>
            <person name="Kuhara S."/>
            <person name="Goto S."/>
            <person name="Yabuzaki J."/>
            <person name="Kanehisa M."/>
            <person name="Yamashita A."/>
            <person name="Oshima K."/>
            <person name="Furuya K."/>
            <person name="Yoshino C."/>
            <person name="Shiba T."/>
            <person name="Hattori M."/>
            <person name="Ogasawara N."/>
            <person name="Hayashi H."/>
            <person name="Hiramatsu K."/>
        </authorList>
    </citation>
    <scope>NUCLEOTIDE SEQUENCE [LARGE SCALE GENOMIC DNA]</scope>
    <source>
        <strain>Mu50 / ATCC 700699</strain>
    </source>
</reference>
<proteinExistence type="inferred from homology"/>
<accession>Q99V76</accession>
<dbReference type="EMBL" id="BA000017">
    <property type="protein sequence ID" value="BAB57178.1"/>
    <property type="molecule type" value="Genomic_DNA"/>
</dbReference>
<dbReference type="RefSeq" id="WP_001154223.1">
    <property type="nucleotide sequence ID" value="NC_002758.2"/>
</dbReference>
<dbReference type="SMR" id="Q99V76"/>
<dbReference type="KEGG" id="sav:SAV1016"/>
<dbReference type="HOGENOM" id="CLU_054518_0_0_9"/>
<dbReference type="PhylomeDB" id="Q99V76"/>
<dbReference type="UniPathway" id="UPA00556"/>
<dbReference type="Proteomes" id="UP000002481">
    <property type="component" value="Chromosome"/>
</dbReference>
<dbReference type="GO" id="GO:0005886">
    <property type="term" value="C:plasma membrane"/>
    <property type="evidence" value="ECO:0007669"/>
    <property type="project" value="UniProtKB-SubCell"/>
</dbReference>
<dbReference type="GO" id="GO:0015297">
    <property type="term" value="F:antiporter activity"/>
    <property type="evidence" value="ECO:0007669"/>
    <property type="project" value="UniProtKB-KW"/>
</dbReference>
<dbReference type="GO" id="GO:0006869">
    <property type="term" value="P:lipid transport"/>
    <property type="evidence" value="ECO:0007669"/>
    <property type="project" value="UniProtKB-KW"/>
</dbReference>
<dbReference type="GO" id="GO:0070395">
    <property type="term" value="P:lipoteichoic acid biosynthetic process"/>
    <property type="evidence" value="ECO:0007669"/>
    <property type="project" value="UniProtKB-UniPathway"/>
</dbReference>
<dbReference type="CDD" id="cd17325">
    <property type="entry name" value="MFS_MdtG_SLC18_like"/>
    <property type="match status" value="1"/>
</dbReference>
<dbReference type="Gene3D" id="1.20.1250.20">
    <property type="entry name" value="MFS general substrate transporter like domains"/>
    <property type="match status" value="2"/>
</dbReference>
<dbReference type="InterPro" id="IPR050495">
    <property type="entry name" value="ATG22/LtaA_families"/>
</dbReference>
<dbReference type="InterPro" id="IPR011701">
    <property type="entry name" value="MFS"/>
</dbReference>
<dbReference type="InterPro" id="IPR020846">
    <property type="entry name" value="MFS_dom"/>
</dbReference>
<dbReference type="InterPro" id="IPR036259">
    <property type="entry name" value="MFS_trans_sf"/>
</dbReference>
<dbReference type="NCBIfam" id="NF047396">
    <property type="entry name" value="MFS_flip_LtaA"/>
    <property type="match status" value="1"/>
</dbReference>
<dbReference type="PANTHER" id="PTHR23519">
    <property type="entry name" value="AUTOPHAGY-RELATED PROTEIN 22"/>
    <property type="match status" value="1"/>
</dbReference>
<dbReference type="PANTHER" id="PTHR23519:SF1">
    <property type="entry name" value="AUTOPHAGY-RELATED PROTEIN 22"/>
    <property type="match status" value="1"/>
</dbReference>
<dbReference type="Pfam" id="PF07690">
    <property type="entry name" value="MFS_1"/>
    <property type="match status" value="1"/>
</dbReference>
<dbReference type="SUPFAM" id="SSF103473">
    <property type="entry name" value="MFS general substrate transporter"/>
    <property type="match status" value="1"/>
</dbReference>
<dbReference type="PROSITE" id="PS50850">
    <property type="entry name" value="MFS"/>
    <property type="match status" value="1"/>
</dbReference>
<organism>
    <name type="scientific">Staphylococcus aureus (strain Mu50 / ATCC 700699)</name>
    <dbReference type="NCBI Taxonomy" id="158878"/>
    <lineage>
        <taxon>Bacteria</taxon>
        <taxon>Bacillati</taxon>
        <taxon>Bacillota</taxon>
        <taxon>Bacilli</taxon>
        <taxon>Bacillales</taxon>
        <taxon>Staphylococcaceae</taxon>
        <taxon>Staphylococcus</taxon>
    </lineage>
</organism>
<feature type="chain" id="PRO_0000287156" description="Proton-coupled antiporter flippase LtaA">
    <location>
        <begin position="1"/>
        <end position="396"/>
    </location>
</feature>
<feature type="transmembrane region" description="Helical" evidence="2">
    <location>
        <begin position="15"/>
        <end position="34"/>
    </location>
</feature>
<feature type="transmembrane region" description="Helical" evidence="2">
    <location>
        <begin position="46"/>
        <end position="73"/>
    </location>
</feature>
<feature type="transmembrane region" description="Helical" evidence="2">
    <location>
        <begin position="80"/>
        <end position="99"/>
    </location>
</feature>
<feature type="transmembrane region" description="Helical" evidence="2">
    <location>
        <begin position="105"/>
        <end position="126"/>
    </location>
</feature>
<feature type="transmembrane region" description="Helical" evidence="2">
    <location>
        <begin position="138"/>
        <end position="159"/>
    </location>
</feature>
<feature type="transmembrane region" description="Helical" evidence="2">
    <location>
        <begin position="165"/>
        <end position="184"/>
    </location>
</feature>
<feature type="transmembrane region" description="Helical" evidence="2">
    <location>
        <begin position="211"/>
        <end position="231"/>
    </location>
</feature>
<feature type="transmembrane region" description="Helical" evidence="2">
    <location>
        <begin position="243"/>
        <end position="264"/>
    </location>
</feature>
<feature type="transmembrane region" description="Helical" evidence="2">
    <location>
        <begin position="276"/>
        <end position="298"/>
    </location>
</feature>
<feature type="transmembrane region" description="Helical" evidence="2">
    <location>
        <begin position="304"/>
        <end position="326"/>
    </location>
</feature>
<feature type="transmembrane region" description="Helical" evidence="2">
    <location>
        <begin position="338"/>
        <end position="358"/>
    </location>
</feature>
<feature type="transmembrane region" description="Helical" evidence="2">
    <location>
        <begin position="370"/>
        <end position="390"/>
    </location>
</feature>
<keyword id="KW-0050">Antiport</keyword>
<keyword id="KW-1003">Cell membrane</keyword>
<keyword id="KW-0445">Lipid transport</keyword>
<keyword id="KW-0472">Membrane</keyword>
<keyword id="KW-0812">Transmembrane</keyword>
<keyword id="KW-1133">Transmembrane helix</keyword>
<keyword id="KW-0813">Transport</keyword>
<keyword id="KW-0843">Virulence</keyword>
<sequence>MQDSSLNNYANHKNFILMLIILFLMEFARGMYILSYINFLPTVTSIAVAITSLAFSIHFIADASTNFVIGFLLKKFGTKIVLTTGFILAFTSLFLVIWFPASPFVIIFSAMMLGIAVSPIWVIMLSSVEEDKRGKQMGYVYFSWLLGLLVGMVFMNLLIKVHPTRFAFMMSLVVLIAWILYYFVDVKLTNYNTRPVKAQLRQIVDVTKRHLLLFPGILLQGAAIAALVPILPTYATKVINVSTIEYTVAIIIGGIGCAVSMLFLSKLIDNRSRNFMYGVILSGFILYMILIFTLSMIVNIHIVWIIALAIGLMYGILLPAWNTFMARFIKSDEQEETWGVFNSIQGFGSMIGPLFGGLITQFTNDLNNTFYFSALIFLVLAVFYGSYFIANREKAK</sequence>
<protein>
    <recommendedName>
        <fullName evidence="1">Proton-coupled antiporter flippase LtaA</fullName>
    </recommendedName>
    <alternativeName>
        <fullName evidence="1">Lipoteichoic acid protein A</fullName>
    </alternativeName>
</protein>
<evidence type="ECO:0000250" key="1">
    <source>
        <dbReference type="UniProtKB" id="Q2FZP8"/>
    </source>
</evidence>
<evidence type="ECO:0000255" key="2"/>
<evidence type="ECO:0000305" key="3"/>
<gene>
    <name type="primary">ltaA</name>
    <name type="ordered locus">SAV1016</name>
</gene>
<name>LTAA_STAAM</name>
<comment type="function">
    <text evidence="1">Proton-coupled antiporter flippase that catalyzes the translocation, from the inner to the outer leaflet of the cell membrane, of the lipid-linked disaccharide (anchor-LLD) that anchors lipoteichoic acids (LTA) to the cell membrane.</text>
</comment>
<comment type="pathway">
    <text evidence="1">Cell wall biogenesis; lipoteichoic acid biosynthesis.</text>
</comment>
<comment type="subcellular location">
    <subcellularLocation>
        <location evidence="1">Cell membrane</location>
        <topology evidence="1">Multi-pass membrane protein</topology>
    </subcellularLocation>
</comment>
<comment type="similarity">
    <text evidence="3">Belongs to the major facilitator superfamily. LtaA family.</text>
</comment>